<reference key="1">
    <citation type="journal article" date="2007" name="J. Bacteriol.">
        <title>The complete genome sequence of Campylobacter jejuni strain 81116 (NCTC11828).</title>
        <authorList>
            <person name="Pearson B.M."/>
            <person name="Gaskin D.J.H."/>
            <person name="Segers R.P.A.M."/>
            <person name="Wells J.M."/>
            <person name="Nuijten P.J.M."/>
            <person name="van Vliet A.H.M."/>
        </authorList>
    </citation>
    <scope>NUCLEOTIDE SEQUENCE [LARGE SCALE GENOMIC DNA]</scope>
    <source>
        <strain>81116 / NCTC 11828</strain>
    </source>
</reference>
<proteinExistence type="inferred from homology"/>
<keyword id="KW-0687">Ribonucleoprotein</keyword>
<keyword id="KW-0689">Ribosomal protein</keyword>
<organism>
    <name type="scientific">Campylobacter jejuni subsp. jejuni serotype O:6 (strain 81116 / NCTC 11828)</name>
    <dbReference type="NCBI Taxonomy" id="407148"/>
    <lineage>
        <taxon>Bacteria</taxon>
        <taxon>Pseudomonadati</taxon>
        <taxon>Campylobacterota</taxon>
        <taxon>Epsilonproteobacteria</taxon>
        <taxon>Campylobacterales</taxon>
        <taxon>Campylobacteraceae</taxon>
        <taxon>Campylobacter</taxon>
    </lineage>
</organism>
<sequence length="118" mass="13700">MKNKYIEQFEAKQIEGKNVPDFRAGDTLKLAIRIKEGDKTRIQNFEGICIARRGNGVSETFIVRKMGANNVGVERIFPIYSESLESITVLRRGRVRRARLFYLRDRRGKAARIKELKK</sequence>
<feature type="chain" id="PRO_1000072242" description="Large ribosomal subunit protein bL19">
    <location>
        <begin position="1"/>
        <end position="118"/>
    </location>
</feature>
<gene>
    <name evidence="1" type="primary">rplS</name>
    <name type="ordered locus">C8J_0681</name>
</gene>
<name>RL19_CAMJ8</name>
<comment type="function">
    <text evidence="1">This protein is located at the 30S-50S ribosomal subunit interface and may play a role in the structure and function of the aminoacyl-tRNA binding site.</text>
</comment>
<comment type="similarity">
    <text evidence="1">Belongs to the bacterial ribosomal protein bL19 family.</text>
</comment>
<accession>A8FLE3</accession>
<dbReference type="EMBL" id="CP000814">
    <property type="protein sequence ID" value="ABV52280.1"/>
    <property type="molecule type" value="Genomic_DNA"/>
</dbReference>
<dbReference type="RefSeq" id="WP_002854824.1">
    <property type="nucleotide sequence ID" value="NC_009839.1"/>
</dbReference>
<dbReference type="SMR" id="A8FLE3"/>
<dbReference type="KEGG" id="cju:C8J_0681"/>
<dbReference type="HOGENOM" id="CLU_103507_2_2_7"/>
<dbReference type="GO" id="GO:0022625">
    <property type="term" value="C:cytosolic large ribosomal subunit"/>
    <property type="evidence" value="ECO:0007669"/>
    <property type="project" value="TreeGrafter"/>
</dbReference>
<dbReference type="GO" id="GO:0003735">
    <property type="term" value="F:structural constituent of ribosome"/>
    <property type="evidence" value="ECO:0007669"/>
    <property type="project" value="InterPro"/>
</dbReference>
<dbReference type="GO" id="GO:0006412">
    <property type="term" value="P:translation"/>
    <property type="evidence" value="ECO:0007669"/>
    <property type="project" value="UniProtKB-UniRule"/>
</dbReference>
<dbReference type="FunFam" id="2.30.30.790:FF:000001">
    <property type="entry name" value="50S ribosomal protein L19"/>
    <property type="match status" value="1"/>
</dbReference>
<dbReference type="Gene3D" id="2.30.30.790">
    <property type="match status" value="1"/>
</dbReference>
<dbReference type="HAMAP" id="MF_00402">
    <property type="entry name" value="Ribosomal_bL19"/>
    <property type="match status" value="1"/>
</dbReference>
<dbReference type="InterPro" id="IPR001857">
    <property type="entry name" value="Ribosomal_bL19"/>
</dbReference>
<dbReference type="InterPro" id="IPR018257">
    <property type="entry name" value="Ribosomal_bL19_CS"/>
</dbReference>
<dbReference type="InterPro" id="IPR038657">
    <property type="entry name" value="Ribosomal_bL19_sf"/>
</dbReference>
<dbReference type="InterPro" id="IPR008991">
    <property type="entry name" value="Translation_prot_SH3-like_sf"/>
</dbReference>
<dbReference type="NCBIfam" id="TIGR01024">
    <property type="entry name" value="rplS_bact"/>
    <property type="match status" value="1"/>
</dbReference>
<dbReference type="PANTHER" id="PTHR15680:SF9">
    <property type="entry name" value="LARGE RIBOSOMAL SUBUNIT PROTEIN BL19M"/>
    <property type="match status" value="1"/>
</dbReference>
<dbReference type="PANTHER" id="PTHR15680">
    <property type="entry name" value="RIBOSOMAL PROTEIN L19"/>
    <property type="match status" value="1"/>
</dbReference>
<dbReference type="Pfam" id="PF01245">
    <property type="entry name" value="Ribosomal_L19"/>
    <property type="match status" value="1"/>
</dbReference>
<dbReference type="PIRSF" id="PIRSF002191">
    <property type="entry name" value="Ribosomal_L19"/>
    <property type="match status" value="1"/>
</dbReference>
<dbReference type="PRINTS" id="PR00061">
    <property type="entry name" value="RIBOSOMALL19"/>
</dbReference>
<dbReference type="SUPFAM" id="SSF50104">
    <property type="entry name" value="Translation proteins SH3-like domain"/>
    <property type="match status" value="1"/>
</dbReference>
<dbReference type="PROSITE" id="PS01015">
    <property type="entry name" value="RIBOSOMAL_L19"/>
    <property type="match status" value="1"/>
</dbReference>
<protein>
    <recommendedName>
        <fullName evidence="1">Large ribosomal subunit protein bL19</fullName>
    </recommendedName>
    <alternativeName>
        <fullName evidence="2">50S ribosomal protein L19</fullName>
    </alternativeName>
</protein>
<evidence type="ECO:0000255" key="1">
    <source>
        <dbReference type="HAMAP-Rule" id="MF_00402"/>
    </source>
</evidence>
<evidence type="ECO:0000305" key="2"/>